<proteinExistence type="inferred from homology"/>
<comment type="function">
    <text evidence="1">NDH-1 shuttles electrons from NADH, via FMN and iron-sulfur (Fe-S) centers, to quinones in the respiratory chain. The immediate electron acceptor for the enzyme in this species is believed to be ubiquinone. Couples the redox reaction to proton translocation (for every two electrons transferred, four hydrogen ions are translocated across the cytoplasmic membrane), and thus conserves the redox energy in a proton gradient.</text>
</comment>
<comment type="catalytic activity">
    <reaction evidence="1">
        <text>a quinone + NADH + 5 H(+)(in) = a quinol + NAD(+) + 4 H(+)(out)</text>
        <dbReference type="Rhea" id="RHEA:57888"/>
        <dbReference type="ChEBI" id="CHEBI:15378"/>
        <dbReference type="ChEBI" id="CHEBI:24646"/>
        <dbReference type="ChEBI" id="CHEBI:57540"/>
        <dbReference type="ChEBI" id="CHEBI:57945"/>
        <dbReference type="ChEBI" id="CHEBI:132124"/>
    </reaction>
</comment>
<comment type="cofactor">
    <cofactor evidence="1">
        <name>[4Fe-4S] cluster</name>
        <dbReference type="ChEBI" id="CHEBI:49883"/>
    </cofactor>
    <text evidence="1">Binds 1 [4Fe-4S] cluster.</text>
</comment>
<comment type="subunit">
    <text evidence="1">NDH-1 is composed of 14 different subunits. Subunits NuoB, C, D, E, F, and G constitute the peripheral sector of the complex.</text>
</comment>
<comment type="subcellular location">
    <subcellularLocation>
        <location evidence="1">Cell inner membrane</location>
        <topology evidence="1">Peripheral membrane protein</topology>
        <orientation evidence="1">Cytoplasmic side</orientation>
    </subcellularLocation>
</comment>
<comment type="similarity">
    <text evidence="1">Belongs to the complex I 20 kDa subunit family.</text>
</comment>
<feature type="chain" id="PRO_0000376334" description="NADH-quinone oxidoreductase subunit B 1">
    <location>
        <begin position="1"/>
        <end position="174"/>
    </location>
</feature>
<feature type="binding site" evidence="1">
    <location>
        <position position="53"/>
    </location>
    <ligand>
        <name>[4Fe-4S] cluster</name>
        <dbReference type="ChEBI" id="CHEBI:49883"/>
    </ligand>
</feature>
<feature type="binding site" evidence="1">
    <location>
        <position position="54"/>
    </location>
    <ligand>
        <name>[4Fe-4S] cluster</name>
        <dbReference type="ChEBI" id="CHEBI:49883"/>
    </ligand>
</feature>
<feature type="binding site" evidence="1">
    <location>
        <position position="118"/>
    </location>
    <ligand>
        <name>[4Fe-4S] cluster</name>
        <dbReference type="ChEBI" id="CHEBI:49883"/>
    </ligand>
</feature>
<feature type="binding site" evidence="1">
    <location>
        <position position="148"/>
    </location>
    <ligand>
        <name>[4Fe-4S] cluster</name>
        <dbReference type="ChEBI" id="CHEBI:49883"/>
    </ligand>
</feature>
<reference key="1">
    <citation type="journal article" date="2009" name="J. Bacteriol.">
        <title>Complete genome sequence of Rhodobacter sphaeroides KD131.</title>
        <authorList>
            <person name="Lim S.-K."/>
            <person name="Kim S.J."/>
            <person name="Cha S.H."/>
            <person name="Oh Y.-K."/>
            <person name="Rhee H.-J."/>
            <person name="Kim M.-S."/>
            <person name="Lee J.K."/>
        </authorList>
    </citation>
    <scope>NUCLEOTIDE SEQUENCE [LARGE SCALE GENOMIC DNA]</scope>
    <source>
        <strain>KD131 / KCTC 12085</strain>
    </source>
</reference>
<accession>B9KQW1</accession>
<dbReference type="EC" id="7.1.1.-" evidence="1"/>
<dbReference type="EMBL" id="CP001150">
    <property type="protein sequence ID" value="ACM00688.1"/>
    <property type="molecule type" value="Genomic_DNA"/>
</dbReference>
<dbReference type="RefSeq" id="WP_002719665.1">
    <property type="nucleotide sequence ID" value="NC_011963.1"/>
</dbReference>
<dbReference type="SMR" id="B9KQW1"/>
<dbReference type="GeneID" id="67446269"/>
<dbReference type="KEGG" id="rsk:RSKD131_0828"/>
<dbReference type="HOGENOM" id="CLU_055737_7_0_5"/>
<dbReference type="GO" id="GO:0005886">
    <property type="term" value="C:plasma membrane"/>
    <property type="evidence" value="ECO:0007669"/>
    <property type="project" value="UniProtKB-SubCell"/>
</dbReference>
<dbReference type="GO" id="GO:0045271">
    <property type="term" value="C:respiratory chain complex I"/>
    <property type="evidence" value="ECO:0007669"/>
    <property type="project" value="TreeGrafter"/>
</dbReference>
<dbReference type="GO" id="GO:0051539">
    <property type="term" value="F:4 iron, 4 sulfur cluster binding"/>
    <property type="evidence" value="ECO:0007669"/>
    <property type="project" value="UniProtKB-KW"/>
</dbReference>
<dbReference type="GO" id="GO:0005506">
    <property type="term" value="F:iron ion binding"/>
    <property type="evidence" value="ECO:0007669"/>
    <property type="project" value="UniProtKB-UniRule"/>
</dbReference>
<dbReference type="GO" id="GO:0008137">
    <property type="term" value="F:NADH dehydrogenase (ubiquinone) activity"/>
    <property type="evidence" value="ECO:0007669"/>
    <property type="project" value="InterPro"/>
</dbReference>
<dbReference type="GO" id="GO:0050136">
    <property type="term" value="F:NADH:ubiquinone reductase (non-electrogenic) activity"/>
    <property type="evidence" value="ECO:0007669"/>
    <property type="project" value="UniProtKB-UniRule"/>
</dbReference>
<dbReference type="GO" id="GO:0048038">
    <property type="term" value="F:quinone binding"/>
    <property type="evidence" value="ECO:0007669"/>
    <property type="project" value="UniProtKB-KW"/>
</dbReference>
<dbReference type="GO" id="GO:0009060">
    <property type="term" value="P:aerobic respiration"/>
    <property type="evidence" value="ECO:0007669"/>
    <property type="project" value="TreeGrafter"/>
</dbReference>
<dbReference type="GO" id="GO:0015990">
    <property type="term" value="P:electron transport coupled proton transport"/>
    <property type="evidence" value="ECO:0007669"/>
    <property type="project" value="TreeGrafter"/>
</dbReference>
<dbReference type="FunFam" id="3.40.50.12280:FF:000001">
    <property type="entry name" value="NADH-quinone oxidoreductase subunit B 2"/>
    <property type="match status" value="1"/>
</dbReference>
<dbReference type="Gene3D" id="3.40.50.12280">
    <property type="match status" value="1"/>
</dbReference>
<dbReference type="HAMAP" id="MF_01356">
    <property type="entry name" value="NDH1_NuoB"/>
    <property type="match status" value="1"/>
</dbReference>
<dbReference type="InterPro" id="IPR006137">
    <property type="entry name" value="NADH_UbQ_OxRdtase-like_20kDa"/>
</dbReference>
<dbReference type="InterPro" id="IPR006138">
    <property type="entry name" value="NADH_UQ_OxRdtase_20Kd_su"/>
</dbReference>
<dbReference type="NCBIfam" id="TIGR01957">
    <property type="entry name" value="nuoB_fam"/>
    <property type="match status" value="1"/>
</dbReference>
<dbReference type="NCBIfam" id="NF005012">
    <property type="entry name" value="PRK06411.1"/>
    <property type="match status" value="1"/>
</dbReference>
<dbReference type="PANTHER" id="PTHR11995">
    <property type="entry name" value="NADH DEHYDROGENASE"/>
    <property type="match status" value="1"/>
</dbReference>
<dbReference type="PANTHER" id="PTHR11995:SF14">
    <property type="entry name" value="NADH DEHYDROGENASE [UBIQUINONE] IRON-SULFUR PROTEIN 7, MITOCHONDRIAL"/>
    <property type="match status" value="1"/>
</dbReference>
<dbReference type="Pfam" id="PF01058">
    <property type="entry name" value="Oxidored_q6"/>
    <property type="match status" value="1"/>
</dbReference>
<dbReference type="SUPFAM" id="SSF56770">
    <property type="entry name" value="HydA/Nqo6-like"/>
    <property type="match status" value="1"/>
</dbReference>
<dbReference type="PROSITE" id="PS01150">
    <property type="entry name" value="COMPLEX1_20K"/>
    <property type="match status" value="1"/>
</dbReference>
<keyword id="KW-0004">4Fe-4S</keyword>
<keyword id="KW-0997">Cell inner membrane</keyword>
<keyword id="KW-1003">Cell membrane</keyword>
<keyword id="KW-0408">Iron</keyword>
<keyword id="KW-0411">Iron-sulfur</keyword>
<keyword id="KW-0472">Membrane</keyword>
<keyword id="KW-0479">Metal-binding</keyword>
<keyword id="KW-0520">NAD</keyword>
<keyword id="KW-0874">Quinone</keyword>
<keyword id="KW-1278">Translocase</keyword>
<keyword id="KW-0813">Transport</keyword>
<keyword id="KW-0830">Ubiquinone</keyword>
<organism>
    <name type="scientific">Cereibacter sphaeroides (strain KD131 / KCTC 12085)</name>
    <name type="common">Rhodobacter sphaeroides</name>
    <dbReference type="NCBI Taxonomy" id="557760"/>
    <lineage>
        <taxon>Bacteria</taxon>
        <taxon>Pseudomonadati</taxon>
        <taxon>Pseudomonadota</taxon>
        <taxon>Alphaproteobacteria</taxon>
        <taxon>Rhodobacterales</taxon>
        <taxon>Paracoccaceae</taxon>
        <taxon>Cereibacter</taxon>
    </lineage>
</organism>
<name>NUOB1_CERSK</name>
<evidence type="ECO:0000255" key="1">
    <source>
        <dbReference type="HAMAP-Rule" id="MF_01356"/>
    </source>
</evidence>
<gene>
    <name evidence="1" type="primary">nuoB1</name>
    <name type="ordered locus">RSKD131_0828</name>
</gene>
<sequence>MTGLNTAGSDRDYDTQSLNRELQDKGFLLTTTEDLINWARTGSLHWMTFGLACCAVEMMHTSMPRYDVERFGVAPRASPRQSDVMIVAGTLTNKMAPALRKVYDQMPEPRYVISMGSCANGGGYYHYSYSVVRGCDRIVPVDIYVPGCPPTAEALLYGILQLQRKIRRTGTITR</sequence>
<protein>
    <recommendedName>
        <fullName evidence="1">NADH-quinone oxidoreductase subunit B 1</fullName>
        <ecNumber evidence="1">7.1.1.-</ecNumber>
    </recommendedName>
    <alternativeName>
        <fullName evidence="1">NADH dehydrogenase I subunit B 1</fullName>
    </alternativeName>
    <alternativeName>
        <fullName evidence="1">NDH-1 subunit B 1</fullName>
    </alternativeName>
</protein>